<keyword id="KW-0574">Periplasm</keyword>
<keyword id="KW-1185">Reference proteome</keyword>
<keyword id="KW-0732">Signal</keyword>
<sequence length="167" mass="19307">MRSPKVKFLTIFTLSILITKMSFASSACFNEAGTMFRIEPNLIKAIALVESNLKKDSIGKNRDKKNNIKSFDYGLMQINQMHIPMLKKRGIIKDERDLLDNPCLNIKIGTEILYKHFSRCGMTWQCLGTYNAGFAMDNQKKRLQYAKKIYIVYTRLNELDNRKALAK</sequence>
<name>PBL_ECO57</name>
<proteinExistence type="inferred from homology"/>
<evidence type="ECO:0000255" key="1"/>
<evidence type="ECO:0000305" key="2"/>
<reference key="1">
    <citation type="journal article" date="2001" name="Nature">
        <title>Genome sequence of enterohaemorrhagic Escherichia coli O157:H7.</title>
        <authorList>
            <person name="Perna N.T."/>
            <person name="Plunkett G. III"/>
            <person name="Burland V."/>
            <person name="Mau B."/>
            <person name="Glasner J.D."/>
            <person name="Rose D.J."/>
            <person name="Mayhew G.F."/>
            <person name="Evans P.S."/>
            <person name="Gregor J."/>
            <person name="Kirkpatrick H.A."/>
            <person name="Posfai G."/>
            <person name="Hackett J."/>
            <person name="Klink S."/>
            <person name="Boutin A."/>
            <person name="Shao Y."/>
            <person name="Miller L."/>
            <person name="Grotbeck E.J."/>
            <person name="Davis N.W."/>
            <person name="Lim A."/>
            <person name="Dimalanta E.T."/>
            <person name="Potamousis K."/>
            <person name="Apodaca J."/>
            <person name="Anantharaman T.S."/>
            <person name="Lin J."/>
            <person name="Yen G."/>
            <person name="Schwartz D.C."/>
            <person name="Welch R.A."/>
            <person name="Blattner F.R."/>
        </authorList>
    </citation>
    <scope>NUCLEOTIDE SEQUENCE [LARGE SCALE GENOMIC DNA]</scope>
    <source>
        <strain>O157:H7 / EDL933 / ATCC 700927 / EHEC</strain>
    </source>
</reference>
<reference key="2">
    <citation type="journal article" date="2001" name="DNA Res.">
        <title>Complete genome sequence of enterohemorrhagic Escherichia coli O157:H7 and genomic comparison with a laboratory strain K-12.</title>
        <authorList>
            <person name="Hayashi T."/>
            <person name="Makino K."/>
            <person name="Ohnishi M."/>
            <person name="Kurokawa K."/>
            <person name="Ishii K."/>
            <person name="Yokoyama K."/>
            <person name="Han C.-G."/>
            <person name="Ohtsubo E."/>
            <person name="Nakayama K."/>
            <person name="Murata T."/>
            <person name="Tanaka M."/>
            <person name="Tobe T."/>
            <person name="Iida T."/>
            <person name="Takami H."/>
            <person name="Honda T."/>
            <person name="Sasakawa C."/>
            <person name="Ogasawara N."/>
            <person name="Yasunaga T."/>
            <person name="Kuhara S."/>
            <person name="Shiba T."/>
            <person name="Hattori M."/>
            <person name="Shinagawa H."/>
        </authorList>
    </citation>
    <scope>NUCLEOTIDE SEQUENCE [LARGE SCALE GENOMIC DNA]</scope>
    <source>
        <strain>O157:H7 / Sakai / RIMD 0509952 / EHEC</strain>
    </source>
</reference>
<accession>Q8X6H3</accession>
<protein>
    <recommendedName>
        <fullName>Peptidoglycan-binding-like protein</fullName>
    </recommendedName>
</protein>
<dbReference type="EMBL" id="AE005174">
    <property type="protein sequence ID" value="AAG57967.1"/>
    <property type="molecule type" value="Genomic_DNA"/>
</dbReference>
<dbReference type="EMBL" id="BA000007">
    <property type="protein sequence ID" value="BAB37134.1"/>
    <property type="status" value="ALT_INIT"/>
    <property type="molecule type" value="Genomic_DNA"/>
</dbReference>
<dbReference type="PIR" id="C85938">
    <property type="entry name" value="C85938"/>
</dbReference>
<dbReference type="PIR" id="G91092">
    <property type="entry name" value="G91092"/>
</dbReference>
<dbReference type="RefSeq" id="NP_311738.1">
    <property type="nucleotide sequence ID" value="NC_002695.1"/>
</dbReference>
<dbReference type="RefSeq" id="WP_001301847.1">
    <property type="nucleotide sequence ID" value="NZ_VOAI01000003.1"/>
</dbReference>
<dbReference type="SMR" id="Q8X6H3"/>
<dbReference type="STRING" id="155864.Z4175"/>
<dbReference type="KEGG" id="ece:Z4175"/>
<dbReference type="PATRIC" id="fig|83334.175.peg.3309"/>
<dbReference type="eggNOG" id="COG0741">
    <property type="taxonomic scope" value="Bacteria"/>
</dbReference>
<dbReference type="HOGENOM" id="CLU_094905_1_2_6"/>
<dbReference type="OMA" id="KIYVVYT"/>
<dbReference type="Proteomes" id="UP000000558">
    <property type="component" value="Chromosome"/>
</dbReference>
<dbReference type="Proteomes" id="UP000002519">
    <property type="component" value="Chromosome"/>
</dbReference>
<dbReference type="GO" id="GO:0042597">
    <property type="term" value="C:periplasmic space"/>
    <property type="evidence" value="ECO:0007669"/>
    <property type="project" value="UniProtKB-SubCell"/>
</dbReference>
<dbReference type="CDD" id="cd13400">
    <property type="entry name" value="LT_IagB-like"/>
    <property type="match status" value="1"/>
</dbReference>
<dbReference type="Gene3D" id="1.10.530.10">
    <property type="match status" value="1"/>
</dbReference>
<dbReference type="InterPro" id="IPR023346">
    <property type="entry name" value="Lysozyme-like_dom_sf"/>
</dbReference>
<dbReference type="InterPro" id="IPR008258">
    <property type="entry name" value="Transglycosylase_SLT_dom_1"/>
</dbReference>
<dbReference type="Pfam" id="PF01464">
    <property type="entry name" value="SLT"/>
    <property type="match status" value="1"/>
</dbReference>
<dbReference type="SUPFAM" id="SSF53955">
    <property type="entry name" value="Lysozyme-like"/>
    <property type="match status" value="1"/>
</dbReference>
<organism>
    <name type="scientific">Escherichia coli O157:H7</name>
    <dbReference type="NCBI Taxonomy" id="83334"/>
    <lineage>
        <taxon>Bacteria</taxon>
        <taxon>Pseudomonadati</taxon>
        <taxon>Pseudomonadota</taxon>
        <taxon>Gammaproteobacteria</taxon>
        <taxon>Enterobacterales</taxon>
        <taxon>Enterobacteriaceae</taxon>
        <taxon>Escherichia</taxon>
    </lineage>
</organism>
<feature type="signal peptide" evidence="1">
    <location>
        <begin position="1"/>
        <end position="24"/>
    </location>
</feature>
<feature type="chain" id="PRO_0000022017" description="Peptidoglycan-binding-like protein">
    <location>
        <begin position="25"/>
        <end position="167"/>
    </location>
</feature>
<gene>
    <name type="primary">pbl</name>
    <name type="ordered locus">Z4175</name>
    <name type="ordered locus">ECs3711</name>
</gene>
<comment type="subcellular location">
    <subcellularLocation>
        <location evidence="2">Periplasm</location>
    </subcellularLocation>
</comment>
<comment type="similarity">
    <text evidence="2">Belongs to the IagB/IpgF/P19 family.</text>
</comment>
<comment type="sequence caution" evidence="2">
    <conflict type="erroneous initiation">
        <sequence resource="EMBL-CDS" id="BAB37134"/>
    </conflict>
</comment>